<evidence type="ECO:0000250" key="1"/>
<evidence type="ECO:0000255" key="2"/>
<evidence type="ECO:0000305" key="3"/>
<comment type="function">
    <text evidence="1">Has a low ribonuclease activity.</text>
</comment>
<comment type="subcellular location">
    <subcellularLocation>
        <location evidence="3">Secreted</location>
    </subcellularLocation>
</comment>
<comment type="similarity">
    <text evidence="3">Belongs to the pancreatic ribonuclease family.</text>
</comment>
<proteinExistence type="inferred from homology"/>
<keyword id="KW-1015">Disulfide bond</keyword>
<keyword id="KW-0255">Endonuclease</keyword>
<keyword id="KW-0378">Hydrolase</keyword>
<keyword id="KW-0540">Nuclease</keyword>
<keyword id="KW-0964">Secreted</keyword>
<keyword id="KW-0732">Signal</keyword>
<name>RNAS8_MIOTA</name>
<accession>Q8SPZ7</accession>
<dbReference type="EC" id="3.1.27.-"/>
<dbReference type="EMBL" id="AF473857">
    <property type="protein sequence ID" value="AAL89646.1"/>
    <property type="molecule type" value="Genomic_DNA"/>
</dbReference>
<dbReference type="SMR" id="Q8SPZ7"/>
<dbReference type="GO" id="GO:0005615">
    <property type="term" value="C:extracellular space"/>
    <property type="evidence" value="ECO:0007669"/>
    <property type="project" value="TreeGrafter"/>
</dbReference>
<dbReference type="GO" id="GO:0004519">
    <property type="term" value="F:endonuclease activity"/>
    <property type="evidence" value="ECO:0007669"/>
    <property type="project" value="UniProtKB-KW"/>
</dbReference>
<dbReference type="GO" id="GO:0003676">
    <property type="term" value="F:nucleic acid binding"/>
    <property type="evidence" value="ECO:0007669"/>
    <property type="project" value="InterPro"/>
</dbReference>
<dbReference type="GO" id="GO:0004540">
    <property type="term" value="F:RNA nuclease activity"/>
    <property type="evidence" value="ECO:0007669"/>
    <property type="project" value="TreeGrafter"/>
</dbReference>
<dbReference type="GO" id="GO:0050832">
    <property type="term" value="P:defense response to fungus"/>
    <property type="evidence" value="ECO:0007669"/>
    <property type="project" value="TreeGrafter"/>
</dbReference>
<dbReference type="GO" id="GO:0050829">
    <property type="term" value="P:defense response to Gram-negative bacterium"/>
    <property type="evidence" value="ECO:0007669"/>
    <property type="project" value="TreeGrafter"/>
</dbReference>
<dbReference type="GO" id="GO:0050830">
    <property type="term" value="P:defense response to Gram-positive bacterium"/>
    <property type="evidence" value="ECO:0007669"/>
    <property type="project" value="TreeGrafter"/>
</dbReference>
<dbReference type="GO" id="GO:0045087">
    <property type="term" value="P:innate immune response"/>
    <property type="evidence" value="ECO:0007669"/>
    <property type="project" value="TreeGrafter"/>
</dbReference>
<dbReference type="CDD" id="cd06265">
    <property type="entry name" value="RNase_A_canonical"/>
    <property type="match status" value="1"/>
</dbReference>
<dbReference type="FunFam" id="3.10.130.10:FF:000001">
    <property type="entry name" value="Ribonuclease pancreatic"/>
    <property type="match status" value="1"/>
</dbReference>
<dbReference type="Gene3D" id="3.10.130.10">
    <property type="entry name" value="Ribonuclease A-like domain"/>
    <property type="match status" value="1"/>
</dbReference>
<dbReference type="InterPro" id="IPR001427">
    <property type="entry name" value="RNaseA"/>
</dbReference>
<dbReference type="InterPro" id="IPR036816">
    <property type="entry name" value="RNaseA-like_dom_sf"/>
</dbReference>
<dbReference type="InterPro" id="IPR023411">
    <property type="entry name" value="RNaseA_AS"/>
</dbReference>
<dbReference type="InterPro" id="IPR023412">
    <property type="entry name" value="RNaseA_domain"/>
</dbReference>
<dbReference type="PANTHER" id="PTHR11437">
    <property type="entry name" value="RIBONUCLEASE"/>
    <property type="match status" value="1"/>
</dbReference>
<dbReference type="PANTHER" id="PTHR11437:SF25">
    <property type="entry name" value="RIBONUCLEASE 8"/>
    <property type="match status" value="1"/>
</dbReference>
<dbReference type="Pfam" id="PF00074">
    <property type="entry name" value="RnaseA"/>
    <property type="match status" value="1"/>
</dbReference>
<dbReference type="PRINTS" id="PR00794">
    <property type="entry name" value="RIBONUCLEASE"/>
</dbReference>
<dbReference type="SMART" id="SM00092">
    <property type="entry name" value="RNAse_Pc"/>
    <property type="match status" value="1"/>
</dbReference>
<dbReference type="SUPFAM" id="SSF54076">
    <property type="entry name" value="RNase A-like"/>
    <property type="match status" value="1"/>
</dbReference>
<dbReference type="PROSITE" id="PS00127">
    <property type="entry name" value="RNASE_PANCREATIC"/>
    <property type="match status" value="1"/>
</dbReference>
<organism>
    <name type="scientific">Miopithecus talapoin</name>
    <name type="common">Angolan talapoin</name>
    <name type="synonym">Cercopithecus talapoin</name>
    <dbReference type="NCBI Taxonomy" id="36231"/>
    <lineage>
        <taxon>Eukaryota</taxon>
        <taxon>Metazoa</taxon>
        <taxon>Chordata</taxon>
        <taxon>Craniata</taxon>
        <taxon>Vertebrata</taxon>
        <taxon>Euteleostomi</taxon>
        <taxon>Mammalia</taxon>
        <taxon>Eutheria</taxon>
        <taxon>Euarchontoglires</taxon>
        <taxon>Primates</taxon>
        <taxon>Haplorrhini</taxon>
        <taxon>Catarrhini</taxon>
        <taxon>Cercopithecidae</taxon>
        <taxon>Cercopithecinae</taxon>
        <taxon>Miopithecus</taxon>
    </lineage>
</organism>
<sequence>MAPARAGCCPLLLLLLGLRVAQIPVSAKPKDMTSSQWFKTQHVQPSPEACYSAMSNISKYIEWCKDLNTFLHEPFSSVATTCQTPNIACKNRHKNCHQSSGPMSLTMCELTSGKYPNCRYKEKHLNAPYIVACDPPQQGDPGYPLVPVHLDKVV</sequence>
<reference key="1">
    <citation type="journal article" date="2002" name="Nucleic Acids Res.">
        <title>RNase 8, a novel RNase A superfamily ribonuclease expressed uniquely in placenta.</title>
        <authorList>
            <person name="Zhang J."/>
            <person name="Dyer K.D."/>
            <person name="Rosenberg H.F."/>
        </authorList>
    </citation>
    <scope>NUCLEOTIDE SEQUENCE [GENOMIC DNA]</scope>
</reference>
<gene>
    <name type="primary">RNASE8</name>
</gene>
<feature type="signal peptide" evidence="2">
    <location>
        <begin position="1"/>
        <end position="27"/>
    </location>
</feature>
<feature type="chain" id="PRO_0000030905" description="Ribonuclease 8">
    <location>
        <begin position="28"/>
        <end position="154"/>
    </location>
</feature>
<feature type="active site" description="Proton acceptor" evidence="1">
    <location>
        <position position="42"/>
    </location>
</feature>
<feature type="active site" description="Proton donor" evidence="1">
    <location>
        <position position="149"/>
    </location>
</feature>
<feature type="binding site" evidence="1">
    <location>
        <begin position="65"/>
        <end position="69"/>
    </location>
    <ligand>
        <name>substrate</name>
    </ligand>
</feature>
<feature type="binding site" evidence="1">
    <location>
        <position position="90"/>
    </location>
    <ligand>
        <name>substrate</name>
    </ligand>
</feature>
<feature type="disulfide bond" evidence="1">
    <location>
        <begin position="64"/>
        <end position="118"/>
    </location>
</feature>
<feature type="disulfide bond" evidence="1">
    <location>
        <begin position="82"/>
        <end position="133"/>
    </location>
</feature>
<feature type="disulfide bond" evidence="1">
    <location>
        <begin position="89"/>
        <end position="96"/>
    </location>
</feature>
<protein>
    <recommendedName>
        <fullName>Ribonuclease 8</fullName>
        <shortName>RNase 8</shortName>
        <ecNumber>3.1.27.-</ecNumber>
    </recommendedName>
</protein>